<protein>
    <recommendedName>
        <fullName evidence="1">NADH-quinone oxidoreductase subunit I</fullName>
        <ecNumber evidence="1">7.1.1.-</ecNumber>
    </recommendedName>
    <alternativeName>
        <fullName evidence="1">NADH dehydrogenase I subunit I</fullName>
    </alternativeName>
    <alternativeName>
        <fullName evidence="1">NDH-1 subunit I</fullName>
    </alternativeName>
</protein>
<feature type="chain" id="PRO_1000067766" description="NADH-quinone oxidoreductase subunit I">
    <location>
        <begin position="1"/>
        <end position="162"/>
    </location>
</feature>
<feature type="domain" description="4Fe-4S ferredoxin-type 1" evidence="1">
    <location>
        <begin position="54"/>
        <end position="83"/>
    </location>
</feature>
<feature type="domain" description="4Fe-4S ferredoxin-type 2" evidence="1">
    <location>
        <begin position="93"/>
        <end position="122"/>
    </location>
</feature>
<feature type="binding site" evidence="1">
    <location>
        <position position="63"/>
    </location>
    <ligand>
        <name>[4Fe-4S] cluster</name>
        <dbReference type="ChEBI" id="CHEBI:49883"/>
        <label>1</label>
    </ligand>
</feature>
<feature type="binding site" evidence="1">
    <location>
        <position position="66"/>
    </location>
    <ligand>
        <name>[4Fe-4S] cluster</name>
        <dbReference type="ChEBI" id="CHEBI:49883"/>
        <label>1</label>
    </ligand>
</feature>
<feature type="binding site" evidence="1">
    <location>
        <position position="69"/>
    </location>
    <ligand>
        <name>[4Fe-4S] cluster</name>
        <dbReference type="ChEBI" id="CHEBI:49883"/>
        <label>1</label>
    </ligand>
</feature>
<feature type="binding site" evidence="1">
    <location>
        <position position="73"/>
    </location>
    <ligand>
        <name>[4Fe-4S] cluster</name>
        <dbReference type="ChEBI" id="CHEBI:49883"/>
        <label>2</label>
    </ligand>
</feature>
<feature type="binding site" evidence="1">
    <location>
        <position position="102"/>
    </location>
    <ligand>
        <name>[4Fe-4S] cluster</name>
        <dbReference type="ChEBI" id="CHEBI:49883"/>
        <label>2</label>
    </ligand>
</feature>
<feature type="binding site" evidence="1">
    <location>
        <position position="105"/>
    </location>
    <ligand>
        <name>[4Fe-4S] cluster</name>
        <dbReference type="ChEBI" id="CHEBI:49883"/>
        <label>2</label>
    </ligand>
</feature>
<feature type="binding site" evidence="1">
    <location>
        <position position="108"/>
    </location>
    <ligand>
        <name>[4Fe-4S] cluster</name>
        <dbReference type="ChEBI" id="CHEBI:49883"/>
        <label>2</label>
    </ligand>
</feature>
<feature type="binding site" evidence="1">
    <location>
        <position position="112"/>
    </location>
    <ligand>
        <name>[4Fe-4S] cluster</name>
        <dbReference type="ChEBI" id="CHEBI:49883"/>
        <label>1</label>
    </ligand>
</feature>
<dbReference type="EC" id="7.1.1.-" evidence="1"/>
<dbReference type="EMBL" id="CP000614">
    <property type="protein sequence ID" value="ABO55325.1"/>
    <property type="molecule type" value="Genomic_DNA"/>
</dbReference>
<dbReference type="SMR" id="A4JGC2"/>
<dbReference type="KEGG" id="bvi:Bcep1808_2326"/>
<dbReference type="eggNOG" id="COG1143">
    <property type="taxonomic scope" value="Bacteria"/>
</dbReference>
<dbReference type="HOGENOM" id="CLU_067218_5_1_4"/>
<dbReference type="Proteomes" id="UP000002287">
    <property type="component" value="Chromosome 1"/>
</dbReference>
<dbReference type="GO" id="GO:0005886">
    <property type="term" value="C:plasma membrane"/>
    <property type="evidence" value="ECO:0007669"/>
    <property type="project" value="UniProtKB-SubCell"/>
</dbReference>
<dbReference type="GO" id="GO:0051539">
    <property type="term" value="F:4 iron, 4 sulfur cluster binding"/>
    <property type="evidence" value="ECO:0007669"/>
    <property type="project" value="UniProtKB-KW"/>
</dbReference>
<dbReference type="GO" id="GO:0005506">
    <property type="term" value="F:iron ion binding"/>
    <property type="evidence" value="ECO:0007669"/>
    <property type="project" value="UniProtKB-UniRule"/>
</dbReference>
<dbReference type="GO" id="GO:0050136">
    <property type="term" value="F:NADH:ubiquinone reductase (non-electrogenic) activity"/>
    <property type="evidence" value="ECO:0007669"/>
    <property type="project" value="UniProtKB-UniRule"/>
</dbReference>
<dbReference type="GO" id="GO:0048038">
    <property type="term" value="F:quinone binding"/>
    <property type="evidence" value="ECO:0007669"/>
    <property type="project" value="UniProtKB-KW"/>
</dbReference>
<dbReference type="GO" id="GO:0009060">
    <property type="term" value="P:aerobic respiration"/>
    <property type="evidence" value="ECO:0007669"/>
    <property type="project" value="TreeGrafter"/>
</dbReference>
<dbReference type="FunFam" id="3.30.70.3270:FF:000003">
    <property type="entry name" value="NADH-quinone oxidoreductase subunit I"/>
    <property type="match status" value="1"/>
</dbReference>
<dbReference type="Gene3D" id="3.30.70.3270">
    <property type="match status" value="1"/>
</dbReference>
<dbReference type="HAMAP" id="MF_01351">
    <property type="entry name" value="NDH1_NuoI"/>
    <property type="match status" value="1"/>
</dbReference>
<dbReference type="InterPro" id="IPR017896">
    <property type="entry name" value="4Fe4S_Fe-S-bd"/>
</dbReference>
<dbReference type="InterPro" id="IPR017900">
    <property type="entry name" value="4Fe4S_Fe_S_CS"/>
</dbReference>
<dbReference type="InterPro" id="IPR010226">
    <property type="entry name" value="NADH_quinone_OxRdtase_chainI"/>
</dbReference>
<dbReference type="NCBIfam" id="TIGR01971">
    <property type="entry name" value="NuoI"/>
    <property type="match status" value="1"/>
</dbReference>
<dbReference type="NCBIfam" id="NF004538">
    <property type="entry name" value="PRK05888.1-4"/>
    <property type="match status" value="1"/>
</dbReference>
<dbReference type="NCBIfam" id="NF004539">
    <property type="entry name" value="PRK05888.1-5"/>
    <property type="match status" value="1"/>
</dbReference>
<dbReference type="PANTHER" id="PTHR10849:SF20">
    <property type="entry name" value="NADH DEHYDROGENASE [UBIQUINONE] IRON-SULFUR PROTEIN 8, MITOCHONDRIAL"/>
    <property type="match status" value="1"/>
</dbReference>
<dbReference type="PANTHER" id="PTHR10849">
    <property type="entry name" value="NADH DEHYDROGENASE UBIQUINONE IRON-SULFUR PROTEIN 8, MITOCHONDRIAL"/>
    <property type="match status" value="1"/>
</dbReference>
<dbReference type="Pfam" id="PF12838">
    <property type="entry name" value="Fer4_7"/>
    <property type="match status" value="1"/>
</dbReference>
<dbReference type="SUPFAM" id="SSF54862">
    <property type="entry name" value="4Fe-4S ferredoxins"/>
    <property type="match status" value="1"/>
</dbReference>
<dbReference type="PROSITE" id="PS00198">
    <property type="entry name" value="4FE4S_FER_1"/>
    <property type="match status" value="2"/>
</dbReference>
<dbReference type="PROSITE" id="PS51379">
    <property type="entry name" value="4FE4S_FER_2"/>
    <property type="match status" value="2"/>
</dbReference>
<proteinExistence type="inferred from homology"/>
<organism>
    <name type="scientific">Burkholderia vietnamiensis (strain G4 / LMG 22486)</name>
    <name type="common">Burkholderia cepacia (strain R1808)</name>
    <dbReference type="NCBI Taxonomy" id="269482"/>
    <lineage>
        <taxon>Bacteria</taxon>
        <taxon>Pseudomonadati</taxon>
        <taxon>Pseudomonadota</taxon>
        <taxon>Betaproteobacteria</taxon>
        <taxon>Burkholderiales</taxon>
        <taxon>Burkholderiaceae</taxon>
        <taxon>Burkholderia</taxon>
        <taxon>Burkholderia cepacia complex</taxon>
    </lineage>
</organism>
<accession>A4JGC2</accession>
<comment type="function">
    <text evidence="1">NDH-1 shuttles electrons from NADH, via FMN and iron-sulfur (Fe-S) centers, to quinones in the respiratory chain. The immediate electron acceptor for the enzyme in this species is believed to be ubiquinone. Couples the redox reaction to proton translocation (for every two electrons transferred, four hydrogen ions are translocated across the cytoplasmic membrane), and thus conserves the redox energy in a proton gradient.</text>
</comment>
<comment type="catalytic activity">
    <reaction evidence="1">
        <text>a quinone + NADH + 5 H(+)(in) = a quinol + NAD(+) + 4 H(+)(out)</text>
        <dbReference type="Rhea" id="RHEA:57888"/>
        <dbReference type="ChEBI" id="CHEBI:15378"/>
        <dbReference type="ChEBI" id="CHEBI:24646"/>
        <dbReference type="ChEBI" id="CHEBI:57540"/>
        <dbReference type="ChEBI" id="CHEBI:57945"/>
        <dbReference type="ChEBI" id="CHEBI:132124"/>
    </reaction>
</comment>
<comment type="cofactor">
    <cofactor evidence="1">
        <name>[4Fe-4S] cluster</name>
        <dbReference type="ChEBI" id="CHEBI:49883"/>
    </cofactor>
    <text evidence="1">Binds 2 [4Fe-4S] clusters per subunit.</text>
</comment>
<comment type="subunit">
    <text evidence="1">NDH-1 is composed of 14 different subunits. Subunits NuoA, H, J, K, L, M, N constitute the membrane sector of the complex.</text>
</comment>
<comment type="subcellular location">
    <subcellularLocation>
        <location evidence="1">Cell inner membrane</location>
        <topology evidence="1">Peripheral membrane protein</topology>
    </subcellularLocation>
</comment>
<comment type="similarity">
    <text evidence="1">Belongs to the complex I 23 kDa subunit family.</text>
</comment>
<keyword id="KW-0004">4Fe-4S</keyword>
<keyword id="KW-0997">Cell inner membrane</keyword>
<keyword id="KW-1003">Cell membrane</keyword>
<keyword id="KW-0408">Iron</keyword>
<keyword id="KW-0411">Iron-sulfur</keyword>
<keyword id="KW-0472">Membrane</keyword>
<keyword id="KW-0479">Metal-binding</keyword>
<keyword id="KW-0520">NAD</keyword>
<keyword id="KW-0874">Quinone</keyword>
<keyword id="KW-0677">Repeat</keyword>
<keyword id="KW-1278">Translocase</keyword>
<keyword id="KW-0830">Ubiquinone</keyword>
<reference key="1">
    <citation type="submission" date="2007-03" db="EMBL/GenBank/DDBJ databases">
        <title>Complete sequence of chromosome 1 of Burkholderia vietnamiensis G4.</title>
        <authorList>
            <consortium name="US DOE Joint Genome Institute"/>
            <person name="Copeland A."/>
            <person name="Lucas S."/>
            <person name="Lapidus A."/>
            <person name="Barry K."/>
            <person name="Detter J.C."/>
            <person name="Glavina del Rio T."/>
            <person name="Hammon N."/>
            <person name="Israni S."/>
            <person name="Dalin E."/>
            <person name="Tice H."/>
            <person name="Pitluck S."/>
            <person name="Chain P."/>
            <person name="Malfatti S."/>
            <person name="Shin M."/>
            <person name="Vergez L."/>
            <person name="Schmutz J."/>
            <person name="Larimer F."/>
            <person name="Land M."/>
            <person name="Hauser L."/>
            <person name="Kyrpides N."/>
            <person name="Tiedje J."/>
            <person name="Richardson P."/>
        </authorList>
    </citation>
    <scope>NUCLEOTIDE SEQUENCE [LARGE SCALE GENOMIC DNA]</scope>
    <source>
        <strain>G4 / LMG 22486</strain>
    </source>
</reference>
<gene>
    <name evidence="1" type="primary">nuoI</name>
    <name type="ordered locus">Bcep1808_2326</name>
</gene>
<sequence length="162" mass="18702">MTAIQHFFKTFFLTELLKGLALTGRYTFRRKFTVQFPEEKTPISPRFRGLHALRRYENGEERCIACKLCEAVCPAMAITIESETRADNTRRTTRYDIDLTKCIFCGFCEESCPVDSIVETQILEYHGEKRGDLYFTKEMLLAVGDRYEKDIAAAKAADAPYR</sequence>
<name>NUOI_BURVG</name>
<evidence type="ECO:0000255" key="1">
    <source>
        <dbReference type="HAMAP-Rule" id="MF_01351"/>
    </source>
</evidence>